<accession>P0DO63</accession>
<sequence>MLSSKYISVSFLLLSLSLHAVNCADPLYHFCFSQESYTATSRYGTNLNGLLNLLSTKVPSKGFGLSSTGQGQDRANGLALCRGDVSKTNCTTCVIDAGKELGNRCPYKKGAIIWYDNCLLKYSNIDFFGEIDNKNKFYMWNVQDVENPTSFNPKVKDLLSRLSNKAYANPKFYATGDLKLDSSSKLYGLAQCTRDLSGLDCKKCLDTAISELPNCCDGKRGGRVVGGSCNVRYELYPFVDA</sequence>
<proteinExistence type="evidence at transcript level"/>
<feature type="signal peptide" evidence="2">
    <location>
        <begin position="1"/>
        <end position="23"/>
    </location>
</feature>
<feature type="chain" id="PRO_0000459786" description="Antimicrobial ginkbilobin-2-like protein">
    <location>
        <begin position="24"/>
        <end position="241"/>
    </location>
</feature>
<feature type="domain" description="Gnk2-homologous 1" evidence="4">
    <location>
        <begin position="25"/>
        <end position="127"/>
    </location>
</feature>
<feature type="domain" description="Gnk2-homologous 2" evidence="4">
    <location>
        <begin position="133"/>
        <end position="238"/>
    </location>
</feature>
<feature type="glycosylation site" description="N-linked (GlcNAc...) asparagine" evidence="3">
    <location>
        <position position="89"/>
    </location>
</feature>
<feature type="disulfide bond" evidence="4">
    <location>
        <begin position="81"/>
        <end position="90"/>
    </location>
</feature>
<feature type="disulfide bond" evidence="4">
    <location>
        <begin position="93"/>
        <end position="118"/>
    </location>
</feature>
<feature type="disulfide bond" evidence="4">
    <location>
        <begin position="192"/>
        <end position="201"/>
    </location>
</feature>
<feature type="disulfide bond" evidence="4">
    <location>
        <begin position="204"/>
        <end position="229"/>
    </location>
</feature>
<protein>
    <recommendedName>
        <fullName evidence="10">Antimicrobial ginkbilobin-2-like protein</fullName>
        <shortName evidence="8 9 10">Cast_Gnk2-like</shortName>
    </recommendedName>
</protein>
<name>GNK2L_CASCR</name>
<dbReference type="SMR" id="P0DO63"/>
<dbReference type="GO" id="GO:0005576">
    <property type="term" value="C:extracellular region"/>
    <property type="evidence" value="ECO:0007669"/>
    <property type="project" value="UniProtKB-SubCell"/>
</dbReference>
<dbReference type="GO" id="GO:0042742">
    <property type="term" value="P:defense response to bacterium"/>
    <property type="evidence" value="ECO:0007669"/>
    <property type="project" value="UniProtKB-KW"/>
</dbReference>
<dbReference type="GO" id="GO:0002229">
    <property type="term" value="P:defense response to oomycetes"/>
    <property type="evidence" value="ECO:0000314"/>
    <property type="project" value="UniProtKB"/>
</dbReference>
<dbReference type="GO" id="GO:0002239">
    <property type="term" value="P:response to oomycetes"/>
    <property type="evidence" value="ECO:0000270"/>
    <property type="project" value="UniProtKB"/>
</dbReference>
<dbReference type="CDD" id="cd23509">
    <property type="entry name" value="Gnk2-like"/>
    <property type="match status" value="2"/>
</dbReference>
<dbReference type="FunFam" id="3.30.430.20:FF:000002">
    <property type="entry name" value="Cysteine-rich receptor-like protein kinase 10"/>
    <property type="match status" value="1"/>
</dbReference>
<dbReference type="FunFam" id="3.30.430.20:FF:000009">
    <property type="entry name" value="Cysteine-rich receptor-like protein kinase 28"/>
    <property type="match status" value="1"/>
</dbReference>
<dbReference type="Gene3D" id="3.30.430.20">
    <property type="entry name" value="Gnk2 domain, C-X8-C-X2-C motif"/>
    <property type="match status" value="2"/>
</dbReference>
<dbReference type="InterPro" id="IPR050581">
    <property type="entry name" value="CRR_secretory_protein"/>
</dbReference>
<dbReference type="InterPro" id="IPR002902">
    <property type="entry name" value="GNK2"/>
</dbReference>
<dbReference type="InterPro" id="IPR038408">
    <property type="entry name" value="GNK2_sf"/>
</dbReference>
<dbReference type="PANTHER" id="PTHR32411:SF43">
    <property type="entry name" value="CYSTEINE-RICH REPEAT SECRETORY PROTEIN 38"/>
    <property type="match status" value="1"/>
</dbReference>
<dbReference type="PANTHER" id="PTHR32411">
    <property type="entry name" value="CYSTEINE-RICH REPEAT SECRETORY PROTEIN 38-RELATED"/>
    <property type="match status" value="1"/>
</dbReference>
<dbReference type="Pfam" id="PF01657">
    <property type="entry name" value="Stress-antifung"/>
    <property type="match status" value="2"/>
</dbReference>
<dbReference type="PROSITE" id="PS51473">
    <property type="entry name" value="GNK2"/>
    <property type="match status" value="2"/>
</dbReference>
<comment type="function">
    <text evidence="6 7">Possesses antimicrobial activity toward the oomycete Phytophthora cinnamomi (ink disease agent), thus reducing its growth rate and confering an increased resistance to the plant.</text>
</comment>
<comment type="subcellular location">
    <subcellularLocation>
        <location evidence="1">Secreted</location>
    </subcellularLocation>
</comment>
<comment type="induction">
    <text evidence="5">Accumulates in response to Phytophthora cinnamomi infection; this induction is rapid in resistant cultivars, but delayed in susceptible ones.</text>
</comment>
<comment type="similarity">
    <text evidence="11">Belongs to the cysteine-rich repeat secretory protein family.</text>
</comment>
<organism>
    <name type="scientific">Castanea crenata</name>
    <name type="common">Japanese chestnut</name>
    <dbReference type="NCBI Taxonomy" id="103480"/>
    <lineage>
        <taxon>Eukaryota</taxon>
        <taxon>Viridiplantae</taxon>
        <taxon>Streptophyta</taxon>
        <taxon>Embryophyta</taxon>
        <taxon>Tracheophyta</taxon>
        <taxon>Spermatophyta</taxon>
        <taxon>Magnoliopsida</taxon>
        <taxon>eudicotyledons</taxon>
        <taxon>Gunneridae</taxon>
        <taxon>Pentapetalae</taxon>
        <taxon>rosids</taxon>
        <taxon>fabids</taxon>
        <taxon>Fagales</taxon>
        <taxon>Fagaceae</taxon>
        <taxon>Castanea</taxon>
    </lineage>
</organism>
<evidence type="ECO:0000250" key="1">
    <source>
        <dbReference type="UniProtKB" id="A4ZDL6"/>
    </source>
</evidence>
<evidence type="ECO:0000255" key="2"/>
<evidence type="ECO:0000255" key="3">
    <source>
        <dbReference type="PROSITE-ProRule" id="PRU00498"/>
    </source>
</evidence>
<evidence type="ECO:0000255" key="4">
    <source>
        <dbReference type="PROSITE-ProRule" id="PRU00806"/>
    </source>
</evidence>
<evidence type="ECO:0000269" key="5">
    <source>
    </source>
</evidence>
<evidence type="ECO:0000269" key="6">
    <source>
    </source>
</evidence>
<evidence type="ECO:0000269" key="7">
    <source ref="1"/>
</evidence>
<evidence type="ECO:0000303" key="8">
    <source>
    </source>
</evidence>
<evidence type="ECO:0000303" key="9">
    <source>
    </source>
</evidence>
<evidence type="ECO:0000303" key="10">
    <source ref="1"/>
</evidence>
<evidence type="ECO:0000305" key="11"/>
<gene>
    <name evidence="8 9 10" type="primary">GNK2L</name>
</gene>
<reference key="1">
    <citation type="journal article" date="2023" name="Forests">
        <title>Castanea crenata Ginkbilobin-2-like recombinant protein reveals potential as an antimicrobial against Phytophthora cinnamomi, the causal agent of ink disease in european chestnut.</title>
        <authorList>
            <person name="Colavolpe M.B."/>
            <person name="Vaz Dias F."/>
            <person name="Serrazina S."/>
            <person name="Malho R."/>
            <person name="Costa R.L."/>
        </authorList>
    </citation>
    <scope>NUCLEOTIDE SEQUENCE [MRNA]</scope>
    <scope>FUNCTION</scope>
</reference>
<reference key="2">
    <citation type="journal article" date="2017" name="Front. Plant Sci.">
        <title>Expression profiling of Castanea genes during resistant and susceptible interactions with the oomycete pathogen Phytophthora cinnamomi reveal possible mechanisms of immunity.</title>
        <authorList>
            <person name="Santos C."/>
            <person name="Duarte S."/>
            <person name="Tedesco S."/>
            <person name="Fevereiro P."/>
            <person name="Costa R.L."/>
        </authorList>
    </citation>
    <scope>INDUCTION BY PHYTOPHTHORA CINNAMOMI</scope>
</reference>
<reference key="3">
    <citation type="journal article" date="2022" name="Plants (Basel)">
        <title>Genetic transformation of Quercus ilex somatic embryos with a Gnk2-like protein that reveals a putative anti-oomycete action.</title>
        <authorList>
            <person name="Serrazina S."/>
            <person name="Martinez M.T."/>
            <person name="Cano V."/>
            <person name="Malho R."/>
            <person name="Costa R.L."/>
            <person name="Corredoira E."/>
        </authorList>
    </citation>
    <scope>FUNCTION</scope>
</reference>
<keyword id="KW-0044">Antibiotic</keyword>
<keyword id="KW-0929">Antimicrobial</keyword>
<keyword id="KW-1015">Disulfide bond</keyword>
<keyword id="KW-0325">Glycoprotein</keyword>
<keyword id="KW-0611">Plant defense</keyword>
<keyword id="KW-0677">Repeat</keyword>
<keyword id="KW-0964">Secreted</keyword>
<keyword id="KW-0732">Signal</keyword>